<feature type="peptide" id="PRO_0000378839" description="Periviscerokinin-3" evidence="2">
    <location>
        <begin position="1"/>
        <end position="11"/>
    </location>
</feature>
<feature type="modified residue" description="Valine amide" evidence="2">
    <location>
        <position position="11"/>
    </location>
</feature>
<proteinExistence type="evidence at protein level"/>
<sequence length="11" mass="1147">GSSGMIPFPRV</sequence>
<organism>
    <name type="scientific">Lucihormetica grossei</name>
    <name type="common">Cockroach</name>
    <dbReference type="NCBI Taxonomy" id="521513"/>
    <lineage>
        <taxon>Eukaryota</taxon>
        <taxon>Metazoa</taxon>
        <taxon>Ecdysozoa</taxon>
        <taxon>Arthropoda</taxon>
        <taxon>Hexapoda</taxon>
        <taxon>Insecta</taxon>
        <taxon>Pterygota</taxon>
        <taxon>Neoptera</taxon>
        <taxon>Polyneoptera</taxon>
        <taxon>Dictyoptera</taxon>
        <taxon>Blattodea</taxon>
        <taxon>Blaberoidea</taxon>
        <taxon>Blaberidae</taxon>
        <taxon>Blaberinae</taxon>
        <taxon>Lucihormetica</taxon>
    </lineage>
</organism>
<keyword id="KW-0027">Amidation</keyword>
<keyword id="KW-0903">Direct protein sequencing</keyword>
<keyword id="KW-0527">Neuropeptide</keyword>
<keyword id="KW-0964">Secreted</keyword>
<accession>P85662</accession>
<evidence type="ECO:0000255" key="1"/>
<evidence type="ECO:0000269" key="2">
    <source>
    </source>
</evidence>
<evidence type="ECO:0000303" key="3">
    <source>
    </source>
</evidence>
<evidence type="ECO:0000305" key="4"/>
<reference evidence="4" key="1">
    <citation type="journal article" date="2009" name="BMC Evol. Biol.">
        <title>A proteomic approach for studying insect phylogeny: CAPA peptides of ancient insect taxa (Dictyoptera, Blattoptera) as a test case.</title>
        <authorList>
            <person name="Roth S."/>
            <person name="Fromm B."/>
            <person name="Gaede G."/>
            <person name="Predel R."/>
        </authorList>
    </citation>
    <scope>PROTEIN SEQUENCE</scope>
    <scope>AMIDATION AT VAL-11</scope>
    <source>
        <tissue evidence="2">Abdominal perisympathetic organs</tissue>
    </source>
</reference>
<comment type="function">
    <text evidence="4">Mediates visceral muscle contractile activity (myotropic activity).</text>
</comment>
<comment type="subcellular location">
    <subcellularLocation>
        <location evidence="4">Secreted</location>
    </subcellularLocation>
</comment>
<comment type="similarity">
    <text evidence="1">Belongs to the periviscerokinin family.</text>
</comment>
<name>PVK3_LUCGR</name>
<dbReference type="GO" id="GO:0005576">
    <property type="term" value="C:extracellular region"/>
    <property type="evidence" value="ECO:0007669"/>
    <property type="project" value="UniProtKB-SubCell"/>
</dbReference>
<dbReference type="GO" id="GO:0007218">
    <property type="term" value="P:neuropeptide signaling pathway"/>
    <property type="evidence" value="ECO:0007669"/>
    <property type="project" value="UniProtKB-KW"/>
</dbReference>
<dbReference type="InterPro" id="IPR013231">
    <property type="entry name" value="Periviscerokinin"/>
</dbReference>
<dbReference type="Pfam" id="PF08259">
    <property type="entry name" value="Periviscerokin"/>
    <property type="match status" value="1"/>
</dbReference>
<protein>
    <recommendedName>
        <fullName evidence="3">Periviscerokinin-3</fullName>
        <shortName evidence="3">LucGr-PVK-3</shortName>
    </recommendedName>
</protein>